<dbReference type="EC" id="7.1.1.-" evidence="1"/>
<dbReference type="EMBL" id="BA000039">
    <property type="protein sequence ID" value="BAC07598.1"/>
    <property type="molecule type" value="Genomic_DNA"/>
</dbReference>
<dbReference type="RefSeq" id="NP_680836.1">
    <property type="nucleotide sequence ID" value="NC_004113.1"/>
</dbReference>
<dbReference type="RefSeq" id="WP_011055900.1">
    <property type="nucleotide sequence ID" value="NC_004113.1"/>
</dbReference>
<dbReference type="PDB" id="6HUM">
    <property type="method" value="EM"/>
    <property type="resolution" value="3.34 A"/>
    <property type="chains" value="B=1-515"/>
</dbReference>
<dbReference type="PDB" id="6KHI">
    <property type="method" value="EM"/>
    <property type="resolution" value="3.00 A"/>
    <property type="chains" value="B=1-515"/>
</dbReference>
<dbReference type="PDB" id="6KHJ">
    <property type="method" value="EM"/>
    <property type="resolution" value="3.00 A"/>
    <property type="chains" value="B=1-515"/>
</dbReference>
<dbReference type="PDB" id="6L7O">
    <property type="method" value="EM"/>
    <property type="resolution" value="3.20 A"/>
    <property type="chains" value="B=1-515"/>
</dbReference>
<dbReference type="PDB" id="6L7P">
    <property type="method" value="EM"/>
    <property type="resolution" value="3.60 A"/>
    <property type="chains" value="B=1-515"/>
</dbReference>
<dbReference type="PDB" id="6NBQ">
    <property type="method" value="EM"/>
    <property type="resolution" value="3.10 A"/>
    <property type="chains" value="B=1-515"/>
</dbReference>
<dbReference type="PDB" id="6NBX">
    <property type="method" value="EM"/>
    <property type="resolution" value="3.50 A"/>
    <property type="chains" value="B=1-515"/>
</dbReference>
<dbReference type="PDB" id="6NBY">
    <property type="method" value="EM"/>
    <property type="resolution" value="3.10 A"/>
    <property type="chains" value="B=1-515"/>
</dbReference>
<dbReference type="PDB" id="6TJV">
    <property type="method" value="EM"/>
    <property type="resolution" value="3.20 A"/>
    <property type="chains" value="B=1-515"/>
</dbReference>
<dbReference type="PDBsum" id="6HUM"/>
<dbReference type="PDBsum" id="6KHI"/>
<dbReference type="PDBsum" id="6KHJ"/>
<dbReference type="PDBsum" id="6L7O"/>
<dbReference type="PDBsum" id="6L7P"/>
<dbReference type="PDBsum" id="6NBQ"/>
<dbReference type="PDBsum" id="6NBX"/>
<dbReference type="PDBsum" id="6NBY"/>
<dbReference type="PDBsum" id="6TJV"/>
<dbReference type="EMDB" id="EMD-0281"/>
<dbReference type="EMDB" id="EMD-0415"/>
<dbReference type="EMDB" id="EMD-0425"/>
<dbReference type="EMDB" id="EMD-0849"/>
<dbReference type="EMDB" id="EMD-0850"/>
<dbReference type="EMDB" id="EMD-10513"/>
<dbReference type="EMDB" id="EMD-9989"/>
<dbReference type="EMDB" id="EMD-9990"/>
<dbReference type="SMR" id="Q8DMR6"/>
<dbReference type="IntAct" id="Q8DMR6">
    <property type="interactions" value="1"/>
</dbReference>
<dbReference type="STRING" id="197221.gene:10746623"/>
<dbReference type="TCDB" id="3.D.1.8.2">
    <property type="family name" value="the h+ or na+-translocating nadh dehydrogenase (ndh) family"/>
</dbReference>
<dbReference type="EnsemblBacteria" id="BAC07598">
    <property type="protein sequence ID" value="BAC07598"/>
    <property type="gene ID" value="BAC07598"/>
</dbReference>
<dbReference type="KEGG" id="tel:tll0045"/>
<dbReference type="PATRIC" id="fig|197221.4.peg.44"/>
<dbReference type="eggNOG" id="COG1007">
    <property type="taxonomic scope" value="Bacteria"/>
</dbReference>
<dbReference type="Proteomes" id="UP000000440">
    <property type="component" value="Chromosome"/>
</dbReference>
<dbReference type="GO" id="GO:0031676">
    <property type="term" value="C:plasma membrane-derived thylakoid membrane"/>
    <property type="evidence" value="ECO:0007669"/>
    <property type="project" value="UniProtKB-SubCell"/>
</dbReference>
<dbReference type="GO" id="GO:0008137">
    <property type="term" value="F:NADH dehydrogenase (ubiquinone) activity"/>
    <property type="evidence" value="ECO:0007669"/>
    <property type="project" value="InterPro"/>
</dbReference>
<dbReference type="GO" id="GO:0048038">
    <property type="term" value="F:quinone binding"/>
    <property type="evidence" value="ECO:0007669"/>
    <property type="project" value="UniProtKB-KW"/>
</dbReference>
<dbReference type="GO" id="GO:0042773">
    <property type="term" value="P:ATP synthesis coupled electron transport"/>
    <property type="evidence" value="ECO:0007669"/>
    <property type="project" value="InterPro"/>
</dbReference>
<dbReference type="GO" id="GO:0019684">
    <property type="term" value="P:photosynthesis, light reaction"/>
    <property type="evidence" value="ECO:0007669"/>
    <property type="project" value="UniProtKB-UniRule"/>
</dbReference>
<dbReference type="HAMAP" id="MF_00445">
    <property type="entry name" value="NDH1_NuoN_1"/>
    <property type="match status" value="1"/>
</dbReference>
<dbReference type="InterPro" id="IPR010096">
    <property type="entry name" value="NADH-Q_OxRdtase_suN/2"/>
</dbReference>
<dbReference type="InterPro" id="IPR001750">
    <property type="entry name" value="ND/Mrp_TM"/>
</dbReference>
<dbReference type="InterPro" id="IPR045693">
    <property type="entry name" value="Ndh2_N"/>
</dbReference>
<dbReference type="NCBIfam" id="TIGR01770">
    <property type="entry name" value="NDH_I_N"/>
    <property type="match status" value="1"/>
</dbReference>
<dbReference type="NCBIfam" id="NF002701">
    <property type="entry name" value="PRK02504.1"/>
    <property type="match status" value="1"/>
</dbReference>
<dbReference type="PANTHER" id="PTHR22773">
    <property type="entry name" value="NADH DEHYDROGENASE"/>
    <property type="match status" value="1"/>
</dbReference>
<dbReference type="Pfam" id="PF19530">
    <property type="entry name" value="Ndh2_N"/>
    <property type="match status" value="1"/>
</dbReference>
<dbReference type="Pfam" id="PF00361">
    <property type="entry name" value="Proton_antipo_M"/>
    <property type="match status" value="1"/>
</dbReference>
<dbReference type="PRINTS" id="PR01434">
    <property type="entry name" value="NADHDHGNASE5"/>
</dbReference>
<comment type="function">
    <text evidence="1">NDH-1 shuttles electrons from an unknown electron donor, via FMN and iron-sulfur (Fe-S) centers, to quinones in the respiratory and/or the photosynthetic chain. The immediate electron acceptor for the enzyme in this species is believed to be plastoquinone. Couples the redox reaction to proton translocation, and thus conserves the redox energy in a proton gradient. Cyanobacterial NDH-1 also plays a role in inorganic carbon-concentration.</text>
</comment>
<comment type="catalytic activity">
    <reaction evidence="1">
        <text>a plastoquinone + NADH + (n+1) H(+)(in) = a plastoquinol + NAD(+) + n H(+)(out)</text>
        <dbReference type="Rhea" id="RHEA:42608"/>
        <dbReference type="Rhea" id="RHEA-COMP:9561"/>
        <dbReference type="Rhea" id="RHEA-COMP:9562"/>
        <dbReference type="ChEBI" id="CHEBI:15378"/>
        <dbReference type="ChEBI" id="CHEBI:17757"/>
        <dbReference type="ChEBI" id="CHEBI:57540"/>
        <dbReference type="ChEBI" id="CHEBI:57945"/>
        <dbReference type="ChEBI" id="CHEBI:62192"/>
    </reaction>
</comment>
<comment type="catalytic activity">
    <reaction evidence="1">
        <text>a plastoquinone + NADPH + (n+1) H(+)(in) = a plastoquinol + NADP(+) + n H(+)(out)</text>
        <dbReference type="Rhea" id="RHEA:42612"/>
        <dbReference type="Rhea" id="RHEA-COMP:9561"/>
        <dbReference type="Rhea" id="RHEA-COMP:9562"/>
        <dbReference type="ChEBI" id="CHEBI:15378"/>
        <dbReference type="ChEBI" id="CHEBI:17757"/>
        <dbReference type="ChEBI" id="CHEBI:57783"/>
        <dbReference type="ChEBI" id="CHEBI:58349"/>
        <dbReference type="ChEBI" id="CHEBI:62192"/>
    </reaction>
</comment>
<comment type="subunit">
    <text evidence="1">NDH-1 can be composed of about 15 different subunits; different subcomplexes with different compositions have been identified which probably have different functions.</text>
</comment>
<comment type="subcellular location">
    <subcellularLocation>
        <location evidence="1">Cellular thylakoid membrane</location>
        <topology evidence="1">Multi-pass membrane protein</topology>
    </subcellularLocation>
</comment>
<comment type="similarity">
    <text evidence="1">Belongs to the complex I subunit 2 family.</text>
</comment>
<reference key="1">
    <citation type="journal article" date="2002" name="DNA Res.">
        <title>Complete genome structure of the thermophilic cyanobacterium Thermosynechococcus elongatus BP-1.</title>
        <authorList>
            <person name="Nakamura Y."/>
            <person name="Kaneko T."/>
            <person name="Sato S."/>
            <person name="Ikeuchi M."/>
            <person name="Katoh H."/>
            <person name="Sasamoto S."/>
            <person name="Watanabe A."/>
            <person name="Iriguchi M."/>
            <person name="Kawashima K."/>
            <person name="Kimura T."/>
            <person name="Kishida Y."/>
            <person name="Kiyokawa C."/>
            <person name="Kohara M."/>
            <person name="Matsumoto M."/>
            <person name="Matsuno A."/>
            <person name="Nakazaki N."/>
            <person name="Shimpo S."/>
            <person name="Sugimoto M."/>
            <person name="Takeuchi C."/>
            <person name="Yamada M."/>
            <person name="Tabata S."/>
        </authorList>
    </citation>
    <scope>NUCLEOTIDE SEQUENCE [LARGE SCALE GENOMIC DNA]</scope>
    <source>
        <strain>NIES-2133 / IAM M-273 / BP-1</strain>
    </source>
</reference>
<keyword id="KW-0002">3D-structure</keyword>
<keyword id="KW-0472">Membrane</keyword>
<keyword id="KW-0520">NAD</keyword>
<keyword id="KW-0521">NADP</keyword>
<keyword id="KW-0618">Plastoquinone</keyword>
<keyword id="KW-0874">Quinone</keyword>
<keyword id="KW-1185">Reference proteome</keyword>
<keyword id="KW-0793">Thylakoid</keyword>
<keyword id="KW-1278">Translocase</keyword>
<keyword id="KW-0812">Transmembrane</keyword>
<keyword id="KW-1133">Transmembrane helix</keyword>
<keyword id="KW-0813">Transport</keyword>
<gene>
    <name evidence="1" type="primary">ndhB</name>
    <name type="ordered locus">tll0045</name>
</gene>
<name>NU2C_THEVB</name>
<sequence length="515" mass="55144">MDLVTLAGQLNAGTILPETILIVTLLVVLLADLIQGRQADRWTPYFAIVGLGGAIATMIPLWTQPATISFFGSFISDHLSLFFRGLIALSALGTILMSIRYVEQTGSSLGEFMTILLTATVGGMFIAGAQELVFIFVALETLSIASYLLTGYTKRDSRSNEAALKYLLIGAASSAIFLYGSSLLYGLSGGHTQLPAIAQALSSESLGLVVALVFVIAGISFKISAVPFHQWTPDVYEGAPTPVVAFLSVGSKAAGFALAIRFLTLAFPSVTDQWQLIFTVLAILSMILGNVVALAQTSMKRMLAYSSIGQAGFVMIGFVVGTEAGYASMLFYLLVYLFMNLGAFTCVILFSLRTGTDQISEYAGLYQKDPLLTLGLSLCLLSLGGIPPLAGFFGKIYLFWAGWQAGAYGLVLLGLLTSVISIYYYIRVVKMMVVKEPQEMSEAVRNYPEVSWSSFGLRPLQVGLVMTVIATSLAGILANPLFNLVNTAVWDVPQLANQPTVMEVAYQALSPAGKS</sequence>
<proteinExistence type="evidence at protein level"/>
<accession>Q8DMR6</accession>
<protein>
    <recommendedName>
        <fullName evidence="1">NAD(P)H-quinone oxidoreductase subunit 2</fullName>
        <ecNumber evidence="1">7.1.1.-</ecNumber>
    </recommendedName>
    <alternativeName>
        <fullName evidence="1">NAD(P)H dehydrogenase subunit 2</fullName>
    </alternativeName>
    <alternativeName>
        <fullName evidence="1">NADH-plastoquinone oxidoreductase subunit 2</fullName>
    </alternativeName>
    <alternativeName>
        <fullName evidence="1">NDH-1, subunit 2</fullName>
    </alternativeName>
</protein>
<evidence type="ECO:0000255" key="1">
    <source>
        <dbReference type="HAMAP-Rule" id="MF_00445"/>
    </source>
</evidence>
<evidence type="ECO:0007829" key="2">
    <source>
        <dbReference type="PDB" id="6KHI"/>
    </source>
</evidence>
<evidence type="ECO:0007829" key="3">
    <source>
        <dbReference type="PDB" id="6KHJ"/>
    </source>
</evidence>
<evidence type="ECO:0007829" key="4">
    <source>
        <dbReference type="PDB" id="6NBQ"/>
    </source>
</evidence>
<evidence type="ECO:0007829" key="5">
    <source>
        <dbReference type="PDB" id="6TJV"/>
    </source>
</evidence>
<feature type="chain" id="PRO_0000225358" description="NAD(P)H-quinone oxidoreductase subunit 2">
    <location>
        <begin position="1"/>
        <end position="515"/>
    </location>
</feature>
<feature type="transmembrane region" description="Helical" evidence="1">
    <location>
        <begin position="14"/>
        <end position="34"/>
    </location>
</feature>
<feature type="transmembrane region" description="Helical" evidence="1">
    <location>
        <begin position="42"/>
        <end position="62"/>
    </location>
</feature>
<feature type="transmembrane region" description="Helical" evidence="1">
    <location>
        <begin position="79"/>
        <end position="99"/>
    </location>
</feature>
<feature type="transmembrane region" description="Helical" evidence="1">
    <location>
        <begin position="109"/>
        <end position="128"/>
    </location>
</feature>
<feature type="transmembrane region" description="Helical" evidence="1">
    <location>
        <begin position="132"/>
        <end position="151"/>
    </location>
</feature>
<feature type="transmembrane region" description="Helical" evidence="1">
    <location>
        <begin position="167"/>
        <end position="187"/>
    </location>
</feature>
<feature type="transmembrane region" description="Helical" evidence="1">
    <location>
        <begin position="206"/>
        <end position="226"/>
    </location>
</feature>
<feature type="transmembrane region" description="Helical" evidence="1">
    <location>
        <begin position="240"/>
        <end position="260"/>
    </location>
</feature>
<feature type="transmembrane region" description="Helical" evidence="1">
    <location>
        <begin position="274"/>
        <end position="294"/>
    </location>
</feature>
<feature type="transmembrane region" description="Helical" evidence="1">
    <location>
        <begin position="302"/>
        <end position="322"/>
    </location>
</feature>
<feature type="transmembrane region" description="Helical" evidence="1">
    <location>
        <begin position="330"/>
        <end position="350"/>
    </location>
</feature>
<feature type="transmembrane region" description="Helical" evidence="1">
    <location>
        <begin position="374"/>
        <end position="394"/>
    </location>
</feature>
<feature type="transmembrane region" description="Helical" evidence="1">
    <location>
        <begin position="396"/>
        <end position="416"/>
    </location>
</feature>
<feature type="transmembrane region" description="Helical" evidence="1">
    <location>
        <begin position="462"/>
        <end position="482"/>
    </location>
</feature>
<feature type="turn" evidence="2">
    <location>
        <begin position="7"/>
        <end position="9"/>
    </location>
</feature>
<feature type="turn" evidence="2">
    <location>
        <begin position="12"/>
        <end position="14"/>
    </location>
</feature>
<feature type="helix" evidence="2">
    <location>
        <begin position="16"/>
        <end position="34"/>
    </location>
</feature>
<feature type="helix" evidence="2">
    <location>
        <begin position="37"/>
        <end position="41"/>
    </location>
</feature>
<feature type="helix" evidence="2">
    <location>
        <begin position="43"/>
        <end position="62"/>
    </location>
</feature>
<feature type="strand" evidence="5">
    <location>
        <begin position="63"/>
        <end position="65"/>
    </location>
</feature>
<feature type="strand" evidence="2">
    <location>
        <begin position="70"/>
        <end position="73"/>
    </location>
</feature>
<feature type="helix" evidence="2">
    <location>
        <begin position="78"/>
        <end position="97"/>
    </location>
</feature>
<feature type="turn" evidence="2">
    <location>
        <begin position="98"/>
        <end position="100"/>
    </location>
</feature>
<feature type="helix" evidence="2">
    <location>
        <begin position="101"/>
        <end position="104"/>
    </location>
</feature>
<feature type="helix" evidence="2">
    <location>
        <begin position="110"/>
        <end position="127"/>
    </location>
</feature>
<feature type="helix" evidence="2">
    <location>
        <begin position="132"/>
        <end position="150"/>
    </location>
</feature>
<feature type="helix" evidence="2">
    <location>
        <begin position="157"/>
        <end position="187"/>
    </location>
</feature>
<feature type="turn" evidence="2">
    <location>
        <begin position="188"/>
        <end position="190"/>
    </location>
</feature>
<feature type="helix" evidence="2">
    <location>
        <begin position="194"/>
        <end position="200"/>
    </location>
</feature>
<feature type="helix" evidence="2">
    <location>
        <begin position="208"/>
        <end position="223"/>
    </location>
</feature>
<feature type="helix" evidence="2">
    <location>
        <begin position="226"/>
        <end position="231"/>
    </location>
</feature>
<feature type="helix" evidence="2">
    <location>
        <begin position="232"/>
        <end position="238"/>
    </location>
</feature>
<feature type="helix" evidence="2">
    <location>
        <begin position="241"/>
        <end position="263"/>
    </location>
</feature>
<feature type="turn" evidence="2">
    <location>
        <begin position="264"/>
        <end position="266"/>
    </location>
</feature>
<feature type="strand" evidence="2">
    <location>
        <begin position="268"/>
        <end position="270"/>
    </location>
</feature>
<feature type="helix" evidence="2">
    <location>
        <begin position="271"/>
        <end position="290"/>
    </location>
</feature>
<feature type="turn" evidence="2">
    <location>
        <begin position="291"/>
        <end position="294"/>
    </location>
</feature>
<feature type="helix" evidence="2">
    <location>
        <begin position="299"/>
        <end position="320"/>
    </location>
</feature>
<feature type="helix" evidence="2">
    <location>
        <begin position="323"/>
        <end position="353"/>
    </location>
</feature>
<feature type="helix" evidence="2">
    <location>
        <begin position="360"/>
        <end position="362"/>
    </location>
</feature>
<feature type="turn" evidence="2">
    <location>
        <begin position="363"/>
        <end position="368"/>
    </location>
</feature>
<feature type="helix" evidence="2">
    <location>
        <begin position="370"/>
        <end position="384"/>
    </location>
</feature>
<feature type="strand" evidence="5">
    <location>
        <begin position="387"/>
        <end position="389"/>
    </location>
</feature>
<feature type="helix" evidence="2">
    <location>
        <begin position="390"/>
        <end position="403"/>
    </location>
</feature>
<feature type="turn" evidence="2">
    <location>
        <begin position="404"/>
        <end position="406"/>
    </location>
</feature>
<feature type="helix" evidence="2">
    <location>
        <begin position="408"/>
        <end position="433"/>
    </location>
</feature>
<feature type="helix" evidence="3">
    <location>
        <begin position="437"/>
        <end position="439"/>
    </location>
</feature>
<feature type="helix" evidence="2">
    <location>
        <begin position="442"/>
        <end position="445"/>
    </location>
</feature>
<feature type="strand" evidence="2">
    <location>
        <begin position="454"/>
        <end position="456"/>
    </location>
</feature>
<feature type="helix" evidence="2">
    <location>
        <begin position="457"/>
        <end position="476"/>
    </location>
</feature>
<feature type="helix" evidence="2">
    <location>
        <begin position="479"/>
        <end position="486"/>
    </location>
</feature>
<feature type="helix" evidence="4">
    <location>
        <begin position="488"/>
        <end position="491"/>
    </location>
</feature>
<organism>
    <name type="scientific">Thermosynechococcus vestitus (strain NIES-2133 / IAM M-273 / BP-1)</name>
    <dbReference type="NCBI Taxonomy" id="197221"/>
    <lineage>
        <taxon>Bacteria</taxon>
        <taxon>Bacillati</taxon>
        <taxon>Cyanobacteriota</taxon>
        <taxon>Cyanophyceae</taxon>
        <taxon>Acaryochloridales</taxon>
        <taxon>Thermosynechococcaceae</taxon>
        <taxon>Thermosynechococcus</taxon>
    </lineage>
</organism>